<evidence type="ECO:0000255" key="1">
    <source>
        <dbReference type="HAMAP-Rule" id="MF_00021"/>
    </source>
</evidence>
<sequence>MNKLLMVKYASEIFLKGLNKNKFEKILKHNIATALNGVKFDFVFDSGRWFIKGEDLEEVVDRVRNVFGVAEVCIVTEIENDFDTIKNQALLAVKESGKGTFKVETNRANKGFPLNSMDINREVGAYILKNNDEVKVDIHNPECLVNIEIRKKTYIYSKRIKGVNGMPYKTNGQTLLMLSGGIDSPVAGYMMARRGVEVSGVYFHSAPYTSERAKDKVKDLARILTKYIGEMTLYVVPFTDIQMQIIEKCREDELTIIMRRFMMSIACKIAEDKGMESVATGESIGQVASQTMQGLVVSNDCADRPVFRPLISMDKIDIMDISRKIGTYETSILPYEDCCTIFVPKHPKTKPILGQIRKAESVLDKEKLINDAVEKMEVIQIKND</sequence>
<proteinExistence type="inferred from homology"/>
<keyword id="KW-0067">ATP-binding</keyword>
<keyword id="KW-0963">Cytoplasm</keyword>
<keyword id="KW-0547">Nucleotide-binding</keyword>
<keyword id="KW-1185">Reference proteome</keyword>
<keyword id="KW-0694">RNA-binding</keyword>
<keyword id="KW-0784">Thiamine biosynthesis</keyword>
<keyword id="KW-0808">Transferase</keyword>
<keyword id="KW-0820">tRNA-binding</keyword>
<name>THII_CLOAB</name>
<feature type="chain" id="PRO_0000154834" description="Probable tRNA sulfurtransferase">
    <location>
        <begin position="1"/>
        <end position="384"/>
    </location>
</feature>
<feature type="domain" description="THUMP" evidence="1">
    <location>
        <begin position="57"/>
        <end position="160"/>
    </location>
</feature>
<feature type="binding site" evidence="1">
    <location>
        <begin position="177"/>
        <end position="178"/>
    </location>
    <ligand>
        <name>ATP</name>
        <dbReference type="ChEBI" id="CHEBI:30616"/>
    </ligand>
</feature>
<feature type="binding site" evidence="1">
    <location>
        <begin position="202"/>
        <end position="203"/>
    </location>
    <ligand>
        <name>ATP</name>
        <dbReference type="ChEBI" id="CHEBI:30616"/>
    </ligand>
</feature>
<feature type="binding site" evidence="1">
    <location>
        <position position="259"/>
    </location>
    <ligand>
        <name>ATP</name>
        <dbReference type="ChEBI" id="CHEBI:30616"/>
    </ligand>
</feature>
<feature type="binding site" evidence="1">
    <location>
        <position position="281"/>
    </location>
    <ligand>
        <name>ATP</name>
        <dbReference type="ChEBI" id="CHEBI:30616"/>
    </ligand>
</feature>
<feature type="binding site" evidence="1">
    <location>
        <position position="290"/>
    </location>
    <ligand>
        <name>ATP</name>
        <dbReference type="ChEBI" id="CHEBI:30616"/>
    </ligand>
</feature>
<protein>
    <recommendedName>
        <fullName evidence="1">Probable tRNA sulfurtransferase</fullName>
        <ecNumber evidence="1">2.8.1.4</ecNumber>
    </recommendedName>
    <alternativeName>
        <fullName evidence="1">Sulfur carrier protein ThiS sulfurtransferase</fullName>
    </alternativeName>
    <alternativeName>
        <fullName evidence="1">Thiamine biosynthesis protein ThiI</fullName>
    </alternativeName>
    <alternativeName>
        <fullName evidence="1">tRNA 4-thiouridine synthase</fullName>
    </alternativeName>
</protein>
<reference key="1">
    <citation type="journal article" date="2001" name="J. Bacteriol.">
        <title>Genome sequence and comparative analysis of the solvent-producing bacterium Clostridium acetobutylicum.</title>
        <authorList>
            <person name="Noelling J."/>
            <person name="Breton G."/>
            <person name="Omelchenko M.V."/>
            <person name="Makarova K.S."/>
            <person name="Zeng Q."/>
            <person name="Gibson R."/>
            <person name="Lee H.M."/>
            <person name="Dubois J."/>
            <person name="Qiu D."/>
            <person name="Hitti J."/>
            <person name="Wolf Y.I."/>
            <person name="Tatusov R.L."/>
            <person name="Sabathe F."/>
            <person name="Doucette-Stamm L.A."/>
            <person name="Soucaille P."/>
            <person name="Daly M.J."/>
            <person name="Bennett G.N."/>
            <person name="Koonin E.V."/>
            <person name="Smith D.R."/>
        </authorList>
    </citation>
    <scope>NUCLEOTIDE SEQUENCE [LARGE SCALE GENOMIC DNA]</scope>
    <source>
        <strain>ATCC 824 / DSM 792 / JCM 1419 / IAM 19013 / LMG 5710 / NBRC 13948 / NRRL B-527 / VKM B-1787 / 2291 / W</strain>
    </source>
</reference>
<gene>
    <name evidence="1" type="primary">thiI</name>
    <name type="ordered locus">CA_C2971</name>
</gene>
<organism>
    <name type="scientific">Clostridium acetobutylicum (strain ATCC 824 / DSM 792 / JCM 1419 / IAM 19013 / LMG 5710 / NBRC 13948 / NRRL B-527 / VKM B-1787 / 2291 / W)</name>
    <dbReference type="NCBI Taxonomy" id="272562"/>
    <lineage>
        <taxon>Bacteria</taxon>
        <taxon>Bacillati</taxon>
        <taxon>Bacillota</taxon>
        <taxon>Clostridia</taxon>
        <taxon>Eubacteriales</taxon>
        <taxon>Clostridiaceae</taxon>
        <taxon>Clostridium</taxon>
    </lineage>
</organism>
<dbReference type="EC" id="2.8.1.4" evidence="1"/>
<dbReference type="EMBL" id="AE001437">
    <property type="protein sequence ID" value="AAK80913.1"/>
    <property type="molecule type" value="Genomic_DNA"/>
</dbReference>
<dbReference type="PIR" id="F97265">
    <property type="entry name" value="F97265"/>
</dbReference>
<dbReference type="RefSeq" id="NP_349573.1">
    <property type="nucleotide sequence ID" value="NC_003030.1"/>
</dbReference>
<dbReference type="RefSeq" id="WP_010966254.1">
    <property type="nucleotide sequence ID" value="NC_003030.1"/>
</dbReference>
<dbReference type="SMR" id="Q97EY4"/>
<dbReference type="STRING" id="272562.CA_C2971"/>
<dbReference type="GeneID" id="44999459"/>
<dbReference type="KEGG" id="cac:CA_C2971"/>
<dbReference type="PATRIC" id="fig|272562.8.peg.3155"/>
<dbReference type="eggNOG" id="COG0301">
    <property type="taxonomic scope" value="Bacteria"/>
</dbReference>
<dbReference type="HOGENOM" id="CLU_037952_4_0_9"/>
<dbReference type="OrthoDB" id="9773948at2"/>
<dbReference type="UniPathway" id="UPA00060"/>
<dbReference type="Proteomes" id="UP000000814">
    <property type="component" value="Chromosome"/>
</dbReference>
<dbReference type="GO" id="GO:0005829">
    <property type="term" value="C:cytosol"/>
    <property type="evidence" value="ECO:0007669"/>
    <property type="project" value="TreeGrafter"/>
</dbReference>
<dbReference type="GO" id="GO:0005524">
    <property type="term" value="F:ATP binding"/>
    <property type="evidence" value="ECO:0007669"/>
    <property type="project" value="UniProtKB-UniRule"/>
</dbReference>
<dbReference type="GO" id="GO:0004810">
    <property type="term" value="F:CCA tRNA nucleotidyltransferase activity"/>
    <property type="evidence" value="ECO:0007669"/>
    <property type="project" value="InterPro"/>
</dbReference>
<dbReference type="GO" id="GO:0000049">
    <property type="term" value="F:tRNA binding"/>
    <property type="evidence" value="ECO:0007669"/>
    <property type="project" value="UniProtKB-UniRule"/>
</dbReference>
<dbReference type="GO" id="GO:0140741">
    <property type="term" value="F:tRNA-uracil-4 sulfurtransferase activity"/>
    <property type="evidence" value="ECO:0007669"/>
    <property type="project" value="UniProtKB-EC"/>
</dbReference>
<dbReference type="GO" id="GO:0009228">
    <property type="term" value="P:thiamine biosynthetic process"/>
    <property type="evidence" value="ECO:0007669"/>
    <property type="project" value="UniProtKB-KW"/>
</dbReference>
<dbReference type="GO" id="GO:0009229">
    <property type="term" value="P:thiamine diphosphate biosynthetic process"/>
    <property type="evidence" value="ECO:0007669"/>
    <property type="project" value="UniProtKB-UniRule"/>
</dbReference>
<dbReference type="GO" id="GO:0052837">
    <property type="term" value="P:thiazole biosynthetic process"/>
    <property type="evidence" value="ECO:0007669"/>
    <property type="project" value="TreeGrafter"/>
</dbReference>
<dbReference type="GO" id="GO:0002937">
    <property type="term" value="P:tRNA 4-thiouridine biosynthesis"/>
    <property type="evidence" value="ECO:0007669"/>
    <property type="project" value="TreeGrafter"/>
</dbReference>
<dbReference type="CDD" id="cd01712">
    <property type="entry name" value="PPase_ThiI"/>
    <property type="match status" value="1"/>
</dbReference>
<dbReference type="CDD" id="cd11716">
    <property type="entry name" value="THUMP_ThiI"/>
    <property type="match status" value="1"/>
</dbReference>
<dbReference type="FunFam" id="3.40.50.620:FF:000053">
    <property type="entry name" value="Probable tRNA sulfurtransferase"/>
    <property type="match status" value="1"/>
</dbReference>
<dbReference type="Gene3D" id="3.30.2130.30">
    <property type="match status" value="1"/>
</dbReference>
<dbReference type="Gene3D" id="3.40.50.620">
    <property type="entry name" value="HUPs"/>
    <property type="match status" value="1"/>
</dbReference>
<dbReference type="HAMAP" id="MF_00021">
    <property type="entry name" value="ThiI"/>
    <property type="match status" value="1"/>
</dbReference>
<dbReference type="InterPro" id="IPR014729">
    <property type="entry name" value="Rossmann-like_a/b/a_fold"/>
</dbReference>
<dbReference type="InterPro" id="IPR020536">
    <property type="entry name" value="ThiI_AANH"/>
</dbReference>
<dbReference type="InterPro" id="IPR054173">
    <property type="entry name" value="ThiI_fer"/>
</dbReference>
<dbReference type="InterPro" id="IPR049961">
    <property type="entry name" value="ThiI_N"/>
</dbReference>
<dbReference type="InterPro" id="IPR004114">
    <property type="entry name" value="THUMP_dom"/>
</dbReference>
<dbReference type="InterPro" id="IPR049962">
    <property type="entry name" value="THUMP_ThiI"/>
</dbReference>
<dbReference type="InterPro" id="IPR003720">
    <property type="entry name" value="tRNA_STrfase"/>
</dbReference>
<dbReference type="InterPro" id="IPR050102">
    <property type="entry name" value="tRNA_sulfurtransferase_ThiI"/>
</dbReference>
<dbReference type="NCBIfam" id="TIGR00342">
    <property type="entry name" value="tRNA uracil 4-sulfurtransferase ThiI"/>
    <property type="match status" value="1"/>
</dbReference>
<dbReference type="PANTHER" id="PTHR43209">
    <property type="entry name" value="TRNA SULFURTRANSFERASE"/>
    <property type="match status" value="1"/>
</dbReference>
<dbReference type="PANTHER" id="PTHR43209:SF1">
    <property type="entry name" value="TRNA SULFURTRANSFERASE"/>
    <property type="match status" value="1"/>
</dbReference>
<dbReference type="Pfam" id="PF02568">
    <property type="entry name" value="ThiI"/>
    <property type="match status" value="1"/>
</dbReference>
<dbReference type="Pfam" id="PF22025">
    <property type="entry name" value="ThiI_fer"/>
    <property type="match status" value="1"/>
</dbReference>
<dbReference type="Pfam" id="PF02926">
    <property type="entry name" value="THUMP"/>
    <property type="match status" value="1"/>
</dbReference>
<dbReference type="SMART" id="SM00981">
    <property type="entry name" value="THUMP"/>
    <property type="match status" value="1"/>
</dbReference>
<dbReference type="SUPFAM" id="SSF52402">
    <property type="entry name" value="Adenine nucleotide alpha hydrolases-like"/>
    <property type="match status" value="1"/>
</dbReference>
<dbReference type="SUPFAM" id="SSF143437">
    <property type="entry name" value="THUMP domain-like"/>
    <property type="match status" value="1"/>
</dbReference>
<dbReference type="PROSITE" id="PS51165">
    <property type="entry name" value="THUMP"/>
    <property type="match status" value="1"/>
</dbReference>
<accession>Q97EY4</accession>
<comment type="function">
    <text evidence="1">Catalyzes the ATP-dependent transfer of a sulfur to tRNA to produce 4-thiouridine in position 8 of tRNAs, which functions as a near-UV photosensor. Also catalyzes the transfer of sulfur to the sulfur carrier protein ThiS, forming ThiS-thiocarboxylate. This is a step in the synthesis of thiazole, in the thiamine biosynthesis pathway. The sulfur is donated as persulfide by IscS.</text>
</comment>
<comment type="catalytic activity">
    <reaction evidence="1">
        <text>[ThiI sulfur-carrier protein]-S-sulfanyl-L-cysteine + a uridine in tRNA + 2 reduced [2Fe-2S]-[ferredoxin] + ATP + H(+) = [ThiI sulfur-carrier protein]-L-cysteine + a 4-thiouridine in tRNA + 2 oxidized [2Fe-2S]-[ferredoxin] + AMP + diphosphate</text>
        <dbReference type="Rhea" id="RHEA:24176"/>
        <dbReference type="Rhea" id="RHEA-COMP:10000"/>
        <dbReference type="Rhea" id="RHEA-COMP:10001"/>
        <dbReference type="Rhea" id="RHEA-COMP:13337"/>
        <dbReference type="Rhea" id="RHEA-COMP:13338"/>
        <dbReference type="Rhea" id="RHEA-COMP:13339"/>
        <dbReference type="Rhea" id="RHEA-COMP:13340"/>
        <dbReference type="ChEBI" id="CHEBI:15378"/>
        <dbReference type="ChEBI" id="CHEBI:29950"/>
        <dbReference type="ChEBI" id="CHEBI:30616"/>
        <dbReference type="ChEBI" id="CHEBI:33019"/>
        <dbReference type="ChEBI" id="CHEBI:33737"/>
        <dbReference type="ChEBI" id="CHEBI:33738"/>
        <dbReference type="ChEBI" id="CHEBI:61963"/>
        <dbReference type="ChEBI" id="CHEBI:65315"/>
        <dbReference type="ChEBI" id="CHEBI:136798"/>
        <dbReference type="ChEBI" id="CHEBI:456215"/>
        <dbReference type="EC" id="2.8.1.4"/>
    </reaction>
</comment>
<comment type="catalytic activity">
    <reaction evidence="1">
        <text>[ThiS sulfur-carrier protein]-C-terminal Gly-Gly-AMP + S-sulfanyl-L-cysteinyl-[cysteine desulfurase] + AH2 = [ThiS sulfur-carrier protein]-C-terminal-Gly-aminoethanethioate + L-cysteinyl-[cysteine desulfurase] + A + AMP + 2 H(+)</text>
        <dbReference type="Rhea" id="RHEA:43340"/>
        <dbReference type="Rhea" id="RHEA-COMP:12157"/>
        <dbReference type="Rhea" id="RHEA-COMP:12158"/>
        <dbReference type="Rhea" id="RHEA-COMP:12910"/>
        <dbReference type="Rhea" id="RHEA-COMP:19908"/>
        <dbReference type="ChEBI" id="CHEBI:13193"/>
        <dbReference type="ChEBI" id="CHEBI:15378"/>
        <dbReference type="ChEBI" id="CHEBI:17499"/>
        <dbReference type="ChEBI" id="CHEBI:29950"/>
        <dbReference type="ChEBI" id="CHEBI:61963"/>
        <dbReference type="ChEBI" id="CHEBI:90618"/>
        <dbReference type="ChEBI" id="CHEBI:232372"/>
        <dbReference type="ChEBI" id="CHEBI:456215"/>
    </reaction>
</comment>
<comment type="pathway">
    <text evidence="1">Cofactor biosynthesis; thiamine diphosphate biosynthesis.</text>
</comment>
<comment type="subcellular location">
    <subcellularLocation>
        <location evidence="1">Cytoplasm</location>
    </subcellularLocation>
</comment>
<comment type="similarity">
    <text evidence="1">Belongs to the ThiI family.</text>
</comment>